<proteinExistence type="inferred from homology"/>
<organism>
    <name type="scientific">Brevibacillus brevis (strain 47 / JCM 6285 / NBRC 100599)</name>
    <dbReference type="NCBI Taxonomy" id="358681"/>
    <lineage>
        <taxon>Bacteria</taxon>
        <taxon>Bacillati</taxon>
        <taxon>Bacillota</taxon>
        <taxon>Bacilli</taxon>
        <taxon>Bacillales</taxon>
        <taxon>Paenibacillaceae</taxon>
        <taxon>Brevibacillus</taxon>
    </lineage>
</organism>
<accession>C0Z6Q2</accession>
<sequence>MRKTNVSHLVDHFNMTILSGEEGLGREITVTDLSRPGLQLAGYYSYFAEERIQLFGLTEINFFQTLTPEERLERMNFLMQSQVPCFCVTRNQMVPEEMIDVSNRLGVPVLQSPLATTTLVGKVTNFLENRLAPTTTIHGVLTDIYGVGVLIMGSSGIGKSEAALELVKRGHRLVADDAVEIKQTQGGQLSGSAPELIQHLLEIRGVGIINIMTMFGAGAVRNVKNIEMVVQLELWEPHKMYERLGLDEETLKIMDTEIPIITVPVRPGRNLAVIIEVAAMNFRLKRMGYNAAMHFTRKQSNAILEDADSDL</sequence>
<evidence type="ECO:0000255" key="1">
    <source>
        <dbReference type="HAMAP-Rule" id="MF_01249"/>
    </source>
</evidence>
<keyword id="KW-0067">ATP-binding</keyword>
<keyword id="KW-0119">Carbohydrate metabolism</keyword>
<keyword id="KW-0418">Kinase</keyword>
<keyword id="KW-0460">Magnesium</keyword>
<keyword id="KW-0479">Metal-binding</keyword>
<keyword id="KW-0511">Multifunctional enzyme</keyword>
<keyword id="KW-0547">Nucleotide-binding</keyword>
<keyword id="KW-1185">Reference proteome</keyword>
<keyword id="KW-0723">Serine/threonine-protein kinase</keyword>
<keyword id="KW-0808">Transferase</keyword>
<dbReference type="EC" id="2.7.11.-" evidence="1"/>
<dbReference type="EC" id="2.7.4.-" evidence="1"/>
<dbReference type="EMBL" id="AP008955">
    <property type="protein sequence ID" value="BAH46251.1"/>
    <property type="molecule type" value="Genomic_DNA"/>
</dbReference>
<dbReference type="RefSeq" id="WP_015893500.1">
    <property type="nucleotide sequence ID" value="NC_012491.1"/>
</dbReference>
<dbReference type="SMR" id="C0Z6Q2"/>
<dbReference type="STRING" id="358681.BBR47_52740"/>
<dbReference type="KEGG" id="bbe:BBR47_52740"/>
<dbReference type="eggNOG" id="COG1493">
    <property type="taxonomic scope" value="Bacteria"/>
</dbReference>
<dbReference type="HOGENOM" id="CLU_052030_0_1_9"/>
<dbReference type="Proteomes" id="UP000001877">
    <property type="component" value="Chromosome"/>
</dbReference>
<dbReference type="GO" id="GO:0005524">
    <property type="term" value="F:ATP binding"/>
    <property type="evidence" value="ECO:0007669"/>
    <property type="project" value="UniProtKB-UniRule"/>
</dbReference>
<dbReference type="GO" id="GO:0000287">
    <property type="term" value="F:magnesium ion binding"/>
    <property type="evidence" value="ECO:0007669"/>
    <property type="project" value="UniProtKB-UniRule"/>
</dbReference>
<dbReference type="GO" id="GO:0000155">
    <property type="term" value="F:phosphorelay sensor kinase activity"/>
    <property type="evidence" value="ECO:0007669"/>
    <property type="project" value="InterPro"/>
</dbReference>
<dbReference type="GO" id="GO:0004674">
    <property type="term" value="F:protein serine/threonine kinase activity"/>
    <property type="evidence" value="ECO:0007669"/>
    <property type="project" value="UniProtKB-KW"/>
</dbReference>
<dbReference type="GO" id="GO:0004712">
    <property type="term" value="F:protein serine/threonine/tyrosine kinase activity"/>
    <property type="evidence" value="ECO:0007669"/>
    <property type="project" value="UniProtKB-UniRule"/>
</dbReference>
<dbReference type="GO" id="GO:0006109">
    <property type="term" value="P:regulation of carbohydrate metabolic process"/>
    <property type="evidence" value="ECO:0007669"/>
    <property type="project" value="UniProtKB-UniRule"/>
</dbReference>
<dbReference type="CDD" id="cd01918">
    <property type="entry name" value="HprK_C"/>
    <property type="match status" value="1"/>
</dbReference>
<dbReference type="FunFam" id="3.40.50.300:FF:000174">
    <property type="entry name" value="HPr kinase/phosphorylase"/>
    <property type="match status" value="1"/>
</dbReference>
<dbReference type="Gene3D" id="3.40.1390.20">
    <property type="entry name" value="HprK N-terminal domain-like"/>
    <property type="match status" value="1"/>
</dbReference>
<dbReference type="Gene3D" id="3.40.50.300">
    <property type="entry name" value="P-loop containing nucleotide triphosphate hydrolases"/>
    <property type="match status" value="1"/>
</dbReference>
<dbReference type="HAMAP" id="MF_01249">
    <property type="entry name" value="HPr_kinase"/>
    <property type="match status" value="1"/>
</dbReference>
<dbReference type="InterPro" id="IPR003755">
    <property type="entry name" value="HPr(Ser)_kin/Pase"/>
</dbReference>
<dbReference type="InterPro" id="IPR011104">
    <property type="entry name" value="Hpr_kin/Pase_C"/>
</dbReference>
<dbReference type="InterPro" id="IPR011126">
    <property type="entry name" value="Hpr_kin/Pase_Hpr_N"/>
</dbReference>
<dbReference type="InterPro" id="IPR027417">
    <property type="entry name" value="P-loop_NTPase"/>
</dbReference>
<dbReference type="InterPro" id="IPR028979">
    <property type="entry name" value="Ser_kin/Pase_Hpr-like_N_sf"/>
</dbReference>
<dbReference type="NCBIfam" id="TIGR00679">
    <property type="entry name" value="hpr-ser"/>
    <property type="match status" value="1"/>
</dbReference>
<dbReference type="PANTHER" id="PTHR30305:SF1">
    <property type="entry name" value="HPR KINASE_PHOSPHORYLASE"/>
    <property type="match status" value="1"/>
</dbReference>
<dbReference type="PANTHER" id="PTHR30305">
    <property type="entry name" value="PROTEIN YJDM-RELATED"/>
    <property type="match status" value="1"/>
</dbReference>
<dbReference type="Pfam" id="PF07475">
    <property type="entry name" value="Hpr_kinase_C"/>
    <property type="match status" value="1"/>
</dbReference>
<dbReference type="Pfam" id="PF02603">
    <property type="entry name" value="Hpr_kinase_N"/>
    <property type="match status" value="1"/>
</dbReference>
<dbReference type="SUPFAM" id="SSF75138">
    <property type="entry name" value="HprK N-terminal domain-like"/>
    <property type="match status" value="1"/>
</dbReference>
<dbReference type="SUPFAM" id="SSF53795">
    <property type="entry name" value="PEP carboxykinase-like"/>
    <property type="match status" value="1"/>
</dbReference>
<feature type="chain" id="PRO_1000214106" description="HPr kinase/phosphorylase">
    <location>
        <begin position="1"/>
        <end position="311"/>
    </location>
</feature>
<feature type="region of interest" description="Important for the catalytic mechanism of both phosphorylation and dephosphorylation" evidence="1">
    <location>
        <begin position="201"/>
        <end position="210"/>
    </location>
</feature>
<feature type="region of interest" description="Important for the catalytic mechanism of dephosphorylation" evidence="1">
    <location>
        <begin position="264"/>
        <end position="269"/>
    </location>
</feature>
<feature type="active site" evidence="1">
    <location>
        <position position="138"/>
    </location>
</feature>
<feature type="active site" evidence="1">
    <location>
        <position position="159"/>
    </location>
</feature>
<feature type="active site" description="Proton acceptor; for phosphorylation activity. Proton donor; for dephosphorylation activity" evidence="1">
    <location>
        <position position="177"/>
    </location>
</feature>
<feature type="active site" evidence="1">
    <location>
        <position position="243"/>
    </location>
</feature>
<feature type="binding site" evidence="1">
    <location>
        <begin position="153"/>
        <end position="160"/>
    </location>
    <ligand>
        <name>ATP</name>
        <dbReference type="ChEBI" id="CHEBI:30616"/>
    </ligand>
</feature>
<feature type="binding site" evidence="1">
    <location>
        <position position="160"/>
    </location>
    <ligand>
        <name>Mg(2+)</name>
        <dbReference type="ChEBI" id="CHEBI:18420"/>
    </ligand>
</feature>
<feature type="binding site" evidence="1">
    <location>
        <position position="202"/>
    </location>
    <ligand>
        <name>Mg(2+)</name>
        <dbReference type="ChEBI" id="CHEBI:18420"/>
    </ligand>
</feature>
<comment type="function">
    <text evidence="1">Catalyzes the ATP- as well as the pyrophosphate-dependent phosphorylation of a specific serine residue in HPr, a phosphocarrier protein of the phosphoenolpyruvate-dependent sugar phosphotransferase system (PTS). HprK/P also catalyzes the pyrophosphate-producing, inorganic phosphate-dependent dephosphorylation (phosphorolysis) of seryl-phosphorylated HPr (P-Ser-HPr). The two antagonistic activities of HprK/P are regulated by several intracellular metabolites, which change their concentration in response to the absence or presence of rapidly metabolisable carbon sources (glucose, fructose, etc.) in the growth medium. Therefore, by controlling the phosphorylation state of HPr, HPrK/P is a sensor enzyme that plays a major role in the regulation of carbon metabolism and sugar transport: it mediates carbon catabolite repression (CCR), and regulates PTS-catalyzed carbohydrate uptake and inducer exclusion.</text>
</comment>
<comment type="catalytic activity">
    <reaction evidence="1">
        <text>[HPr protein]-L-serine + ATP = [HPr protein]-O-phospho-L-serine + ADP + H(+)</text>
        <dbReference type="Rhea" id="RHEA:46600"/>
        <dbReference type="Rhea" id="RHEA-COMP:11602"/>
        <dbReference type="Rhea" id="RHEA-COMP:11603"/>
        <dbReference type="ChEBI" id="CHEBI:15378"/>
        <dbReference type="ChEBI" id="CHEBI:29999"/>
        <dbReference type="ChEBI" id="CHEBI:30616"/>
        <dbReference type="ChEBI" id="CHEBI:83421"/>
        <dbReference type="ChEBI" id="CHEBI:456216"/>
    </reaction>
</comment>
<comment type="catalytic activity">
    <reaction evidence="1">
        <text>[HPr protein]-O-phospho-L-serine + phosphate + H(+) = [HPr protein]-L-serine + diphosphate</text>
        <dbReference type="Rhea" id="RHEA:46604"/>
        <dbReference type="Rhea" id="RHEA-COMP:11602"/>
        <dbReference type="Rhea" id="RHEA-COMP:11603"/>
        <dbReference type="ChEBI" id="CHEBI:15378"/>
        <dbReference type="ChEBI" id="CHEBI:29999"/>
        <dbReference type="ChEBI" id="CHEBI:33019"/>
        <dbReference type="ChEBI" id="CHEBI:43474"/>
        <dbReference type="ChEBI" id="CHEBI:83421"/>
    </reaction>
</comment>
<comment type="cofactor">
    <cofactor evidence="1">
        <name>Mg(2+)</name>
        <dbReference type="ChEBI" id="CHEBI:18420"/>
    </cofactor>
</comment>
<comment type="subunit">
    <text evidence="1">Homohexamer.</text>
</comment>
<comment type="domain">
    <text evidence="1">The Walker A ATP-binding motif also binds Pi and PPi.</text>
</comment>
<comment type="miscellaneous">
    <text evidence="1">Both phosphorylation and phosphorolysis are carried out by the same active site and suggest a common mechanism for both reactions.</text>
</comment>
<comment type="similarity">
    <text evidence="1">Belongs to the HPrK/P family.</text>
</comment>
<protein>
    <recommendedName>
        <fullName evidence="1">HPr kinase/phosphorylase</fullName>
        <shortName evidence="1">HPrK/P</shortName>
        <ecNumber evidence="1">2.7.11.-</ecNumber>
        <ecNumber evidence="1">2.7.4.-</ecNumber>
    </recommendedName>
    <alternativeName>
        <fullName evidence="1">HPr(Ser) kinase/phosphorylase</fullName>
    </alternativeName>
</protein>
<gene>
    <name evidence="1" type="primary">hprK</name>
    <name type="ordered locus">BBR47_52740</name>
</gene>
<name>HPRK_BREBN</name>
<reference key="1">
    <citation type="submission" date="2005-03" db="EMBL/GenBank/DDBJ databases">
        <title>Brevibacillus brevis strain 47, complete genome.</title>
        <authorList>
            <person name="Hosoyama A."/>
            <person name="Yamada R."/>
            <person name="Hongo Y."/>
            <person name="Terui Y."/>
            <person name="Ankai A."/>
            <person name="Masuyama W."/>
            <person name="Sekiguchi M."/>
            <person name="Takeda T."/>
            <person name="Asano K."/>
            <person name="Ohji S."/>
            <person name="Ichikawa N."/>
            <person name="Narita S."/>
            <person name="Aoki N."/>
            <person name="Miura H."/>
            <person name="Matsushita S."/>
            <person name="Sekigawa T."/>
            <person name="Yamagata H."/>
            <person name="Yoshikawa H."/>
            <person name="Udaka S."/>
            <person name="Tanikawa S."/>
            <person name="Fujita N."/>
        </authorList>
    </citation>
    <scope>NUCLEOTIDE SEQUENCE [LARGE SCALE GENOMIC DNA]</scope>
    <source>
        <strain>47 / JCM 6285 / NBRC 100599</strain>
    </source>
</reference>